<feature type="signal peptide" evidence="2">
    <location>
        <begin position="1"/>
        <end position="28"/>
    </location>
</feature>
<feature type="chain" id="PRO_0000032647" description="Outer membrane protein A">
    <location>
        <begin position="29"/>
        <end position="2249"/>
    </location>
</feature>
<feature type="chain" id="PRO_0000387577" description="120 kDa surface-exposed protein">
    <location>
        <begin position="29"/>
        <end status="unknown"/>
    </location>
</feature>
<feature type="chain" id="PRO_0000387578" description="32 kDa beta peptide">
    <location>
        <begin status="unknown"/>
        <end position="2249"/>
    </location>
</feature>
<feature type="repeat" description="Type I 1">
    <location>
        <begin position="212"/>
        <end position="286"/>
    </location>
</feature>
<feature type="repeat" description="Type II 1">
    <location>
        <begin position="287"/>
        <end position="358"/>
    </location>
</feature>
<feature type="repeat" description="Type II 2">
    <location>
        <begin position="359"/>
        <end position="430"/>
    </location>
</feature>
<feature type="repeat" description="Type I 2">
    <location>
        <begin position="431"/>
        <end position="505"/>
    </location>
</feature>
<feature type="repeat" description="Type II 3">
    <location>
        <begin position="506"/>
        <end position="577"/>
    </location>
</feature>
<feature type="repeat" description="Type I 3">
    <location>
        <begin position="578"/>
        <end position="652"/>
    </location>
</feature>
<feature type="repeat" description="Type II 4">
    <location>
        <begin position="653"/>
        <end position="724"/>
    </location>
</feature>
<feature type="repeat" description="Type I 4">
    <location>
        <begin position="725"/>
        <end position="799"/>
    </location>
</feature>
<feature type="repeat" description="Type I 5">
    <location>
        <begin position="800"/>
        <end position="874"/>
    </location>
</feature>
<feature type="repeat" description="Type I 6">
    <location>
        <begin position="875"/>
        <end position="949"/>
    </location>
</feature>
<feature type="repeat" description="Type II 5">
    <location>
        <begin position="950"/>
        <end position="1021"/>
    </location>
</feature>
<feature type="repeat" description="Type II 6">
    <location>
        <begin position="1022"/>
        <end position="1093"/>
    </location>
</feature>
<feature type="repeat" description="Type II 7">
    <location>
        <begin position="1094"/>
        <end position="1165"/>
    </location>
</feature>
<feature type="repeat" description="Type I 7; truncated">
    <location>
        <begin position="1166"/>
        <end position="1180"/>
    </location>
</feature>
<feature type="domain" description="Autotransporter" evidence="3">
    <location>
        <begin position="1962"/>
        <end position="2249"/>
    </location>
</feature>
<feature type="region of interest" description="14 X approximate tandem repeats">
    <location>
        <begin position="212"/>
        <end position="1180"/>
    </location>
</feature>
<dbReference type="EMBL" id="M31227">
    <property type="protein sequence ID" value="AAA26380.1"/>
    <property type="molecule type" value="Genomic_DNA"/>
</dbReference>
<dbReference type="PIR" id="A41477">
    <property type="entry name" value="A41477"/>
</dbReference>
<dbReference type="GO" id="GO:0009279">
    <property type="term" value="C:cell outer membrane"/>
    <property type="evidence" value="ECO:0007669"/>
    <property type="project" value="UniProtKB-SubCell"/>
</dbReference>
<dbReference type="GO" id="GO:0009986">
    <property type="term" value="C:cell surface"/>
    <property type="evidence" value="ECO:0007669"/>
    <property type="project" value="UniProtKB-SubCell"/>
</dbReference>
<dbReference type="GO" id="GO:0005576">
    <property type="term" value="C:extracellular region"/>
    <property type="evidence" value="ECO:0007669"/>
    <property type="project" value="UniProtKB-SubCell"/>
</dbReference>
<dbReference type="GO" id="GO:0042597">
    <property type="term" value="C:periplasmic space"/>
    <property type="evidence" value="ECO:0007669"/>
    <property type="project" value="UniProtKB-SubCell"/>
</dbReference>
<dbReference type="Gene3D" id="2.40.128.130">
    <property type="entry name" value="Autotransporter beta-domain"/>
    <property type="match status" value="1"/>
</dbReference>
<dbReference type="InterPro" id="IPR005546">
    <property type="entry name" value="Autotransporte_beta"/>
</dbReference>
<dbReference type="InterPro" id="IPR036709">
    <property type="entry name" value="Autotransporte_beta_dom_sf"/>
</dbReference>
<dbReference type="InterPro" id="IPR006315">
    <property type="entry name" value="OM_autotransptr_brl_dom"/>
</dbReference>
<dbReference type="NCBIfam" id="TIGR01414">
    <property type="entry name" value="autotrans_barl"/>
    <property type="match status" value="1"/>
</dbReference>
<dbReference type="Pfam" id="PF03797">
    <property type="entry name" value="Autotransporter"/>
    <property type="match status" value="1"/>
</dbReference>
<dbReference type="SMART" id="SM00869">
    <property type="entry name" value="Autotransporter"/>
    <property type="match status" value="1"/>
</dbReference>
<dbReference type="SUPFAM" id="SSF103515">
    <property type="entry name" value="Autotransporter"/>
    <property type="match status" value="1"/>
</dbReference>
<dbReference type="PROSITE" id="PS51208">
    <property type="entry name" value="AUTOTRANSPORTER"/>
    <property type="match status" value="1"/>
</dbReference>
<protein>
    <recommendedName>
        <fullName>Outer membrane protein A</fullName>
    </recommendedName>
    <alternativeName>
        <fullName>190 kDa antigen</fullName>
    </alternativeName>
    <alternativeName>
        <fullName>Cell surface antigen</fullName>
    </alternativeName>
    <alternativeName>
        <fullName>rOmp A</fullName>
        <shortName>rOmpA</shortName>
    </alternativeName>
    <component>
        <recommendedName>
            <fullName>120 kDa surface-exposed protein</fullName>
        </recommendedName>
        <alternativeName>
            <fullName>120 kDa outer membrane protein OmpA</fullName>
        </alternativeName>
    </component>
    <component>
        <recommendedName>
            <fullName>32 kDa beta peptide</fullName>
        </recommendedName>
    </component>
</protein>
<proteinExistence type="inferred from homology"/>
<gene>
    <name type="primary">ompA</name>
</gene>
<evidence type="ECO:0000250" key="1"/>
<evidence type="ECO:0000255" key="2"/>
<evidence type="ECO:0000255" key="3">
    <source>
        <dbReference type="PROSITE-ProRule" id="PRU00556"/>
    </source>
</evidence>
<evidence type="ECO:0000305" key="4"/>
<reference key="1">
    <citation type="journal article" date="1990" name="Infect. Immun.">
        <title>A protective protein antigen of Rickettsia rickettsii has tandemly repeated, near-identical sequences.</title>
        <authorList>
            <person name="Anderson B.E."/>
            <person name="McDonald G.A."/>
            <person name="Jones D.C."/>
            <person name="Regnery R.L."/>
        </authorList>
    </citation>
    <scope>NUCLEOTIDE SEQUENCE [GENOMIC DNA]</scope>
    <source>
        <strain>R</strain>
    </source>
</reference>
<keyword id="KW-0998">Cell outer membrane</keyword>
<keyword id="KW-0325">Glycoprotein</keyword>
<keyword id="KW-0472">Membrane</keyword>
<keyword id="KW-0574">Periplasm</keyword>
<keyword id="KW-0677">Repeat</keyword>
<keyword id="KW-0964">Secreted</keyword>
<keyword id="KW-0732">Signal</keyword>
<keyword id="KW-0812">Transmembrane</keyword>
<keyword id="KW-1134">Transmembrane beta strand</keyword>
<comment type="function">
    <text>Elicits protective immunity.</text>
</comment>
<comment type="subcellular location">
    <molecule>Outer membrane protein A</molecule>
    <subcellularLocation>
        <location evidence="1">Periplasm</location>
    </subcellularLocation>
</comment>
<comment type="subcellular location">
    <molecule>120 kDa surface-exposed protein</molecule>
    <subcellularLocation>
        <location evidence="1">Secreted</location>
    </subcellularLocation>
    <subcellularLocation>
        <location evidence="1">Cell surface</location>
    </subcellularLocation>
    <text>Surface exposed. This bacterium is covered by a S-layer with hexagonal symmetry.</text>
</comment>
<comment type="subcellular location">
    <molecule>32 kDa beta peptide</molecule>
    <subcellularLocation>
        <location evidence="4">Cell outer membrane</location>
        <topology evidence="4">Multi-pass membrane protein</topology>
    </subcellularLocation>
    <text>The cleaved C-terminal fragment (autotransporter domain) is localized in the outer membrane.</text>
</comment>
<comment type="PTM">
    <text evidence="4">Glycosylated.</text>
</comment>
<comment type="similarity">
    <text evidence="4">Belongs to the rickettsiae OmpA/OmpB family.</text>
</comment>
<accession>P15921</accession>
<sequence>MANISPKLFKKAIQQGLKAALFTTSTAAIMLSSSGALGVATGVIATNNNAAFSNNVGNNNWNEITAAGVANGTPAGGPQNNWAFTYGGDYTVTADAADRIIKAINVAGTTPVGLNITQNTVVGSIITKGNLLPVTLNAGKSLTLNGNNAVAANHGFDAPADNYTGLGNIALGGANAALIIQSAAPSKITLAGNIDGGGIITVKTDAAINGTIGNTNALATVNVGAGTATLGGAVIKATTTKLTNAASVLTLTNANAVLTGAIDNTTGGDNVGVLNLNGALSQVTGDIGNTNSLATISVGAGTATLGGAVIKATTTKLTDAASAVKFTNPVVVTGAIDNTGNANNGIVTFTGNSTVTGNVGNTNALATVNVGAGLLQVQGGVVKANTINLTDNASAVTFTNPVVVTGAIDNTGNANNGIVTFTGNSTVTGDIGNTNALATVNVGAGTATLGGAVIKATTTKLTNAASVLTLTNANAVLTGAIDNTTGGDNVGVLNLNGALSQVTGNIGNTNSLATISVGAGTATLGGAVIKATTTKLTDAASAVKFTNPVVVTGAIDNTGNANNGIVTFTGNSTVTGDIGNTNSLATISVGAGTATLGGAVIKATTTKLTNAASVLTLTNANAVLTGAIDNTTGGDNVGVLNLNGALSQVTGDIGNTNSLATISVGAGTATLGGAVIKATTTKITNAVSAVKFTNPVVVTGAIDSTGNANNGIVTFTGNSTVTGDIGNTNALATVNVGAGTATLGGAVIKATTTKLTNAASVLTLTNANAVLTGAIDNTTGGDNVGVLNLNGALSQVTGDIGNTNSLATISVGAGTATLGGAVIKATTTKLTNAASVLTLTNANAVLTGAVDNTTGGDNVGVLNLNGALSQVTGDIGNTNSLATISVGAGTATLGGAVIKATTTKLTNAASVLTLTNANAVLTGAIDNTTGGDNVGVLNLNGALSQVTGDIGNTNSLATISVGAGTATLGGAVIKATTTKLTDAASAVKFTNPVVVTGAIDNTGNANNGIVTFTGNSTVTGNVGNTNALATVNVGAGLLQVQGGVVKANTINLTDNASAVTFTNPVVVTGAIDNTGNANNGIVTFTGNSTVTGNVGNTNALATVNVGAGLLQVQGGVVKANTINLTDNASAVTFTNPVVVTGAIDNTGNANNGIVTFTGNSTVTGDIGNTNALATVNVGAGITLQAGGSLAANNIDFGARSTLEFNGPLDGGGKAIPYYFKGAIANGNNAILNVNTKLLTASHLTIGTVAEINIGAGNLFTIDASVGDVTILNAQNINFRARDSVLVLSNLTGVGVNNILLAADLVAPGADEGTVVFNGGVNGLNVGSNVAGTARNIGDGGGNKFNTLLIYNAVTITDDVNLEGIQNVLINKNADFTSSTAFNAGAIQINDATYTIDANNGNLNIPAGNIQFAHADAQLVLQNSSGNDRTITLGANIDPDNDDEGIVILNSVTAGKKLTIAGGKTFGGAHKLQTILFKGAGDCSTAGTTFNTTNIVLDITGQLELGATTANVVLFNDAVQLTQTGNIGGFLDFNAKNGMVTLNNNVNVAGAVQNTGGTNNGTLIVLGASNLNRVNGIAMLKVGAGNVTIAKGGKVKIGEIQGTGTNTLTLPAHFNLTGSINKTGGQALKLNFMNGGSVSGVVGTAANSVGDITTAGATSFASSVNAKGTATLGGTTSFANTFTNTGAVTLAKGSITSFAKNVTATSFVANSATINFSNSLAFNSNITGGGTTLTLGANQVTYTGTGSFTDTLTLNTTFDGAAKSGGNILIKSGSTLDLSGVSTLALVVTATNFDMNNISPDTKYTVISAETAGGLKPTSKENVKITINNDNRFVDFTFDASTLTLFAEDIAADVIDGDFAPGGPLANIPNAANIKKSLELMEDAPNGSDARQAFNNFGLMTPLQEADATTHLIQDVVKPSDTIAAVNNQVVASNISSNITALNARMDKVQSGNKGPVSSGDEDMDAKFGAWISPFVGNATQKMCNSISGYKSDTTGGTIGFDGFVSDDLALGLAYTRADTDIKLKNNKTGDKNKVESNIYSLYGLYNVPYENLFVEAIASYSDNKIRSKSRRVIATTLETVGYQTANGKYKSESYTGQLMAGYTYMMPENINLTPLAGLRYSTIKDKGYKETGTTYQNLTVKGKNYNTFDGLLGAKVSSNINVNEIVLTPELYAMVDYAFKNKVSAIDARLQGMTAPLPTNSFKQSKTSFDVGVGVTAKHKMMEYRINYDTNIGSKYFAQQGSVKVRVNF</sequence>
<name>OMPA_RICRI</name>
<organism>
    <name type="scientific">Rickettsia rickettsii</name>
    <dbReference type="NCBI Taxonomy" id="783"/>
    <lineage>
        <taxon>Bacteria</taxon>
        <taxon>Pseudomonadati</taxon>
        <taxon>Pseudomonadota</taxon>
        <taxon>Alphaproteobacteria</taxon>
        <taxon>Rickettsiales</taxon>
        <taxon>Rickettsiaceae</taxon>
        <taxon>Rickettsieae</taxon>
        <taxon>Rickettsia</taxon>
        <taxon>spotted fever group</taxon>
    </lineage>
</organism>